<sequence length="311" mass="37128">MSTFHFSTIVSRTHIFKLMPMIHSLHEHCDDFHLYVLCVDQKAYELLQHVPWEHVTFVQLHEMEDPELLKAKSNRTFHEYCWTLKPAFLFHVMSKWDDAEYFAHMDTDLFFFSDPARIFAENPTASLYLTDHRNSPRFMSYYDRTGRFNTGFVGAGNTKEAYEAVWQWRQDCIEFCTVEMDTERKTYGDQRYVEKWPEQFKGVHVVKSIGANTALWNIENYKVGQKDGRVYIDETPLIFYHFSGFTLVTEKEFNLCWYYRIEDEATIKMIYMPYILNLKRWIDEIQSAFPDFADGFIPKHAVPDTHFIQLD</sequence>
<protein>
    <recommendedName>
        <fullName>Uncharacterized protein YfnD</fullName>
    </recommendedName>
</protein>
<accession>O31542</accession>
<accession>O06482</accession>
<name>YFND_BACSU</name>
<reference key="1">
    <citation type="journal article" date="1997" name="Microbiology">
        <title>A 23.4 kb segment at the 69 degrees-70 degrees region of the Bacillus subtilis genome.</title>
        <authorList>
            <person name="Yamamoto H."/>
            <person name="Uchiyama S."/>
            <person name="Nugroho F.A."/>
            <person name="Sekiguchi J."/>
        </authorList>
    </citation>
    <scope>NUCLEOTIDE SEQUENCE [GENOMIC DNA]</scope>
    <source>
        <strain>168 / AC327</strain>
    </source>
</reference>
<reference key="2">
    <citation type="journal article" date="1997" name="Nature">
        <title>The complete genome sequence of the Gram-positive bacterium Bacillus subtilis.</title>
        <authorList>
            <person name="Kunst F."/>
            <person name="Ogasawara N."/>
            <person name="Moszer I."/>
            <person name="Albertini A.M."/>
            <person name="Alloni G."/>
            <person name="Azevedo V."/>
            <person name="Bertero M.G."/>
            <person name="Bessieres P."/>
            <person name="Bolotin A."/>
            <person name="Borchert S."/>
            <person name="Borriss R."/>
            <person name="Boursier L."/>
            <person name="Brans A."/>
            <person name="Braun M."/>
            <person name="Brignell S.C."/>
            <person name="Bron S."/>
            <person name="Brouillet S."/>
            <person name="Bruschi C.V."/>
            <person name="Caldwell B."/>
            <person name="Capuano V."/>
            <person name="Carter N.M."/>
            <person name="Choi S.-K."/>
            <person name="Codani J.-J."/>
            <person name="Connerton I.F."/>
            <person name="Cummings N.J."/>
            <person name="Daniel R.A."/>
            <person name="Denizot F."/>
            <person name="Devine K.M."/>
            <person name="Duesterhoeft A."/>
            <person name="Ehrlich S.D."/>
            <person name="Emmerson P.T."/>
            <person name="Entian K.-D."/>
            <person name="Errington J."/>
            <person name="Fabret C."/>
            <person name="Ferrari E."/>
            <person name="Foulger D."/>
            <person name="Fritz C."/>
            <person name="Fujita M."/>
            <person name="Fujita Y."/>
            <person name="Fuma S."/>
            <person name="Galizzi A."/>
            <person name="Galleron N."/>
            <person name="Ghim S.-Y."/>
            <person name="Glaser P."/>
            <person name="Goffeau A."/>
            <person name="Golightly E.J."/>
            <person name="Grandi G."/>
            <person name="Guiseppi G."/>
            <person name="Guy B.J."/>
            <person name="Haga K."/>
            <person name="Haiech J."/>
            <person name="Harwood C.R."/>
            <person name="Henaut A."/>
            <person name="Hilbert H."/>
            <person name="Holsappel S."/>
            <person name="Hosono S."/>
            <person name="Hullo M.-F."/>
            <person name="Itaya M."/>
            <person name="Jones L.-M."/>
            <person name="Joris B."/>
            <person name="Karamata D."/>
            <person name="Kasahara Y."/>
            <person name="Klaerr-Blanchard M."/>
            <person name="Klein C."/>
            <person name="Kobayashi Y."/>
            <person name="Koetter P."/>
            <person name="Koningstein G."/>
            <person name="Krogh S."/>
            <person name="Kumano M."/>
            <person name="Kurita K."/>
            <person name="Lapidus A."/>
            <person name="Lardinois S."/>
            <person name="Lauber J."/>
            <person name="Lazarevic V."/>
            <person name="Lee S.-M."/>
            <person name="Levine A."/>
            <person name="Liu H."/>
            <person name="Masuda S."/>
            <person name="Mauel C."/>
            <person name="Medigue C."/>
            <person name="Medina N."/>
            <person name="Mellado R.P."/>
            <person name="Mizuno M."/>
            <person name="Moestl D."/>
            <person name="Nakai S."/>
            <person name="Noback M."/>
            <person name="Noone D."/>
            <person name="O'Reilly M."/>
            <person name="Ogawa K."/>
            <person name="Ogiwara A."/>
            <person name="Oudega B."/>
            <person name="Park S.-H."/>
            <person name="Parro V."/>
            <person name="Pohl T.M."/>
            <person name="Portetelle D."/>
            <person name="Porwollik S."/>
            <person name="Prescott A.M."/>
            <person name="Presecan E."/>
            <person name="Pujic P."/>
            <person name="Purnelle B."/>
            <person name="Rapoport G."/>
            <person name="Rey M."/>
            <person name="Reynolds S."/>
            <person name="Rieger M."/>
            <person name="Rivolta C."/>
            <person name="Rocha E."/>
            <person name="Roche B."/>
            <person name="Rose M."/>
            <person name="Sadaie Y."/>
            <person name="Sato T."/>
            <person name="Scanlan E."/>
            <person name="Schleich S."/>
            <person name="Schroeter R."/>
            <person name="Scoffone F."/>
            <person name="Sekiguchi J."/>
            <person name="Sekowska A."/>
            <person name="Seror S.J."/>
            <person name="Serror P."/>
            <person name="Shin B.-S."/>
            <person name="Soldo B."/>
            <person name="Sorokin A."/>
            <person name="Tacconi E."/>
            <person name="Takagi T."/>
            <person name="Takahashi H."/>
            <person name="Takemaru K."/>
            <person name="Takeuchi M."/>
            <person name="Tamakoshi A."/>
            <person name="Tanaka T."/>
            <person name="Terpstra P."/>
            <person name="Tognoni A."/>
            <person name="Tosato V."/>
            <person name="Uchiyama S."/>
            <person name="Vandenbol M."/>
            <person name="Vannier F."/>
            <person name="Vassarotti A."/>
            <person name="Viari A."/>
            <person name="Wambutt R."/>
            <person name="Wedler E."/>
            <person name="Wedler H."/>
            <person name="Weitzenegger T."/>
            <person name="Winters P."/>
            <person name="Wipat A."/>
            <person name="Yamamoto H."/>
            <person name="Yamane K."/>
            <person name="Yasumoto K."/>
            <person name="Yata K."/>
            <person name="Yoshida K."/>
            <person name="Yoshikawa H.-F."/>
            <person name="Zumstein E."/>
            <person name="Yoshikawa H."/>
            <person name="Danchin A."/>
        </authorList>
    </citation>
    <scope>NUCLEOTIDE SEQUENCE [LARGE SCALE GENOMIC DNA]</scope>
    <source>
        <strain>168</strain>
    </source>
</reference>
<organism>
    <name type="scientific">Bacillus subtilis (strain 168)</name>
    <dbReference type="NCBI Taxonomy" id="224308"/>
    <lineage>
        <taxon>Bacteria</taxon>
        <taxon>Bacillati</taxon>
        <taxon>Bacillota</taxon>
        <taxon>Bacilli</taxon>
        <taxon>Bacillales</taxon>
        <taxon>Bacillaceae</taxon>
        <taxon>Bacillus</taxon>
    </lineage>
</organism>
<dbReference type="EMBL" id="D86418">
    <property type="protein sequence ID" value="BAA20113.1"/>
    <property type="status" value="ALT_INIT"/>
    <property type="molecule type" value="Genomic_DNA"/>
</dbReference>
<dbReference type="EMBL" id="AL009126">
    <property type="protein sequence ID" value="CAB12550.1"/>
    <property type="molecule type" value="Genomic_DNA"/>
</dbReference>
<dbReference type="PIR" id="G69814">
    <property type="entry name" value="G69814"/>
</dbReference>
<dbReference type="RefSeq" id="NP_388612.1">
    <property type="nucleotide sequence ID" value="NC_000964.3"/>
</dbReference>
<dbReference type="RefSeq" id="WP_009966783.1">
    <property type="nucleotide sequence ID" value="NZ_OZ025638.1"/>
</dbReference>
<dbReference type="FunCoup" id="O31542">
    <property type="interactions" value="56"/>
</dbReference>
<dbReference type="STRING" id="224308.BSU07310"/>
<dbReference type="PaxDb" id="224308-BSU07310"/>
<dbReference type="EnsemblBacteria" id="CAB12550">
    <property type="protein sequence ID" value="CAB12550"/>
    <property type="gene ID" value="BSU_07310"/>
</dbReference>
<dbReference type="GeneID" id="936096"/>
<dbReference type="KEGG" id="bsu:BSU07310"/>
<dbReference type="PATRIC" id="fig|224308.179.peg.793"/>
<dbReference type="eggNOG" id="COG1442">
    <property type="taxonomic scope" value="Bacteria"/>
</dbReference>
<dbReference type="InParanoid" id="O31542"/>
<dbReference type="OrthoDB" id="186344at2"/>
<dbReference type="PhylomeDB" id="O31542"/>
<dbReference type="BioCyc" id="BSUB:BSU07310-MONOMER"/>
<dbReference type="Proteomes" id="UP000001570">
    <property type="component" value="Chromosome"/>
</dbReference>
<dbReference type="Gene3D" id="3.90.550.10">
    <property type="entry name" value="Spore Coat Polysaccharide Biosynthesis Protein SpsA, Chain A"/>
    <property type="match status" value="1"/>
</dbReference>
<dbReference type="InterPro" id="IPR029044">
    <property type="entry name" value="Nucleotide-diphossugar_trans"/>
</dbReference>
<dbReference type="SUPFAM" id="SSF53448">
    <property type="entry name" value="Nucleotide-diphospho-sugar transferases"/>
    <property type="match status" value="1"/>
</dbReference>
<evidence type="ECO:0000305" key="1"/>
<feature type="chain" id="PRO_0000360566" description="Uncharacterized protein YfnD">
    <location>
        <begin position="1"/>
        <end position="311"/>
    </location>
</feature>
<proteinExistence type="predicted"/>
<keyword id="KW-1185">Reference proteome</keyword>
<comment type="sequence caution" evidence="1">
    <conflict type="erroneous initiation">
        <sequence resource="EMBL-CDS" id="BAA20113"/>
    </conflict>
</comment>
<gene>
    <name type="primary">yfnD</name>
    <name type="ordered locus">BSU07310</name>
</gene>